<sequence>MVKAVCVLRGDSKITGIVNFEQESDSSPTTISWEISNHDADAKRGFHITPFGDNTNGCTSAGPHFNPHGKTHGNVTDENRHVGDMGNIETDCDGNSKGSIKDKLIKLIGPHSVIGRTVVIHAGTDDLGKGGNDESLKTGNAGPRPACGVIGVAN</sequence>
<protein>
    <recommendedName>
        <fullName>Superoxide dismutase [Cu-Zn]</fullName>
        <ecNumber evidence="3">1.15.1.1</ecNumber>
    </recommendedName>
</protein>
<accession>Q6T3B0</accession>
<gene>
    <name type="primary">SOD1</name>
</gene>
<feature type="initiator methionine" description="Removed" evidence="2">
    <location>
        <position position="1"/>
    </location>
</feature>
<feature type="chain" id="PRO_0000164124" description="Superoxide dismutase [Cu-Zn]">
    <location>
        <begin position="2"/>
        <end position="154"/>
    </location>
</feature>
<feature type="binding site" evidence="2">
    <location>
        <position position="47"/>
    </location>
    <ligand>
        <name>Cu cation</name>
        <dbReference type="ChEBI" id="CHEBI:23378"/>
        <note>catalytic</note>
    </ligand>
</feature>
<feature type="binding site" evidence="2">
    <location>
        <position position="64"/>
    </location>
    <ligand>
        <name>Cu cation</name>
        <dbReference type="ChEBI" id="CHEBI:23378"/>
        <note>catalytic</note>
    </ligand>
</feature>
<feature type="binding site" evidence="2">
    <location>
        <position position="64"/>
    </location>
    <ligand>
        <name>Zn(2+)</name>
        <dbReference type="ChEBI" id="CHEBI:29105"/>
        <note>structural</note>
    </ligand>
</feature>
<feature type="binding site" evidence="2">
    <location>
        <position position="72"/>
    </location>
    <ligand>
        <name>Zn(2+)</name>
        <dbReference type="ChEBI" id="CHEBI:29105"/>
        <note>structural</note>
    </ligand>
</feature>
<feature type="binding site" evidence="2">
    <location>
        <position position="81"/>
    </location>
    <ligand>
        <name>Zn(2+)</name>
        <dbReference type="ChEBI" id="CHEBI:29105"/>
        <note>structural</note>
    </ligand>
</feature>
<feature type="binding site" evidence="2">
    <location>
        <position position="84"/>
    </location>
    <ligand>
        <name>Zn(2+)</name>
        <dbReference type="ChEBI" id="CHEBI:29105"/>
        <note>structural</note>
    </ligand>
</feature>
<feature type="binding site" evidence="2">
    <location>
        <position position="121"/>
    </location>
    <ligand>
        <name>Cu cation</name>
        <dbReference type="ChEBI" id="CHEBI:23378"/>
        <note>catalytic</note>
    </ligand>
</feature>
<feature type="binding site" evidence="2">
    <location>
        <position position="144"/>
    </location>
    <ligand>
        <name>substrate</name>
    </ligand>
</feature>
<feature type="disulfide bond" evidence="2">
    <location>
        <begin position="58"/>
        <end position="147"/>
    </location>
</feature>
<dbReference type="EC" id="1.15.1.1" evidence="3"/>
<dbReference type="EMBL" id="AY438328">
    <property type="protein sequence ID" value="AAR15417.1"/>
    <property type="molecule type" value="Genomic_DNA"/>
</dbReference>
<dbReference type="SMR" id="Q6T3B0"/>
<dbReference type="GO" id="GO:0005737">
    <property type="term" value="C:cytoplasm"/>
    <property type="evidence" value="ECO:0007669"/>
    <property type="project" value="UniProtKB-SubCell"/>
</dbReference>
<dbReference type="GO" id="GO:0005507">
    <property type="term" value="F:copper ion binding"/>
    <property type="evidence" value="ECO:0007669"/>
    <property type="project" value="InterPro"/>
</dbReference>
<dbReference type="GO" id="GO:0004784">
    <property type="term" value="F:superoxide dismutase activity"/>
    <property type="evidence" value="ECO:0007669"/>
    <property type="project" value="UniProtKB-EC"/>
</dbReference>
<dbReference type="CDD" id="cd00305">
    <property type="entry name" value="Cu-Zn_Superoxide_Dismutase"/>
    <property type="match status" value="1"/>
</dbReference>
<dbReference type="FunFam" id="2.60.40.200:FF:000001">
    <property type="entry name" value="Superoxide dismutase [Cu-Zn]"/>
    <property type="match status" value="1"/>
</dbReference>
<dbReference type="Gene3D" id="2.60.40.200">
    <property type="entry name" value="Superoxide dismutase, copper/zinc binding domain"/>
    <property type="match status" value="1"/>
</dbReference>
<dbReference type="InterPro" id="IPR036423">
    <property type="entry name" value="SOD-like_Cu/Zn_dom_sf"/>
</dbReference>
<dbReference type="InterPro" id="IPR024134">
    <property type="entry name" value="SOD_Cu/Zn_/chaperone"/>
</dbReference>
<dbReference type="InterPro" id="IPR018152">
    <property type="entry name" value="SOD_Cu/Zn_BS"/>
</dbReference>
<dbReference type="InterPro" id="IPR001424">
    <property type="entry name" value="SOD_Cu_Zn_dom"/>
</dbReference>
<dbReference type="PANTHER" id="PTHR10003">
    <property type="entry name" value="SUPEROXIDE DISMUTASE CU-ZN -RELATED"/>
    <property type="match status" value="1"/>
</dbReference>
<dbReference type="Pfam" id="PF00080">
    <property type="entry name" value="Sod_Cu"/>
    <property type="match status" value="1"/>
</dbReference>
<dbReference type="PRINTS" id="PR00068">
    <property type="entry name" value="CUZNDISMTASE"/>
</dbReference>
<dbReference type="SUPFAM" id="SSF49329">
    <property type="entry name" value="Cu,Zn superoxide dismutase-like"/>
    <property type="match status" value="1"/>
</dbReference>
<dbReference type="PROSITE" id="PS00332">
    <property type="entry name" value="SOD_CU_ZN_2"/>
    <property type="match status" value="1"/>
</dbReference>
<keyword id="KW-0049">Antioxidant</keyword>
<keyword id="KW-0186">Copper</keyword>
<keyword id="KW-0963">Cytoplasm</keyword>
<keyword id="KW-1015">Disulfide bond</keyword>
<keyword id="KW-0479">Metal-binding</keyword>
<keyword id="KW-0560">Oxidoreductase</keyword>
<keyword id="KW-0862">Zinc</keyword>
<reference key="1">
    <citation type="submission" date="2003-10" db="EMBL/GenBank/DDBJ databases">
        <title>Comparison of gene structure of the Cu,Zn superoxide dismutase (SOD1) from Cordyceps militaris, Paecillomyces tenuipes and P. sinensis.</title>
        <authorList>
            <person name="Park N.S."/>
            <person name="Lee S.M."/>
            <person name="Jin B.R."/>
            <person name="Sohn H.D."/>
        </authorList>
    </citation>
    <scope>NUCLEOTIDE SEQUENCE [GENOMIC DNA]</scope>
</reference>
<organism>
    <name type="scientific">Pleurocordyceps sinensis</name>
    <name type="common">Polycephalomyces sinensis</name>
    <dbReference type="NCBI Taxonomy" id="99896"/>
    <lineage>
        <taxon>Eukaryota</taxon>
        <taxon>Fungi</taxon>
        <taxon>Dikarya</taxon>
        <taxon>Ascomycota</taxon>
        <taxon>Pezizomycotina</taxon>
        <taxon>Sordariomycetes</taxon>
        <taxon>Hypocreomycetidae</taxon>
        <taxon>Hypocreales</taxon>
        <taxon>Ophiocordycipitaceae</taxon>
        <taxon>Pleurocordyceps</taxon>
    </lineage>
</organism>
<comment type="function">
    <text evidence="1">Destroys radicals which are normally produced within the cells and which are toxic to biological systems.</text>
</comment>
<comment type="catalytic activity">
    <reaction evidence="3">
        <text>2 superoxide + 2 H(+) = H2O2 + O2</text>
        <dbReference type="Rhea" id="RHEA:20696"/>
        <dbReference type="ChEBI" id="CHEBI:15378"/>
        <dbReference type="ChEBI" id="CHEBI:15379"/>
        <dbReference type="ChEBI" id="CHEBI:16240"/>
        <dbReference type="ChEBI" id="CHEBI:18421"/>
        <dbReference type="EC" id="1.15.1.1"/>
    </reaction>
</comment>
<comment type="cofactor">
    <cofactor evidence="2">
        <name>Cu cation</name>
        <dbReference type="ChEBI" id="CHEBI:23378"/>
    </cofactor>
    <text evidence="2">Binds 1 copper ion per subunit.</text>
</comment>
<comment type="cofactor">
    <cofactor evidence="2">
        <name>Zn(2+)</name>
        <dbReference type="ChEBI" id="CHEBI:29105"/>
    </cofactor>
    <text evidence="2">Binds 1 zinc ion per subunit.</text>
</comment>
<comment type="subunit">
    <text evidence="3">Homodimer.</text>
</comment>
<comment type="subcellular location">
    <subcellularLocation>
        <location evidence="2">Cytoplasm</location>
    </subcellularLocation>
</comment>
<comment type="similarity">
    <text evidence="4">Belongs to the Cu-Zn superoxide dismutase family.</text>
</comment>
<proteinExistence type="inferred from homology"/>
<evidence type="ECO:0000250" key="1">
    <source>
        <dbReference type="UniProtKB" id="P00442"/>
    </source>
</evidence>
<evidence type="ECO:0000250" key="2">
    <source>
        <dbReference type="UniProtKB" id="P00445"/>
    </source>
</evidence>
<evidence type="ECO:0000250" key="3">
    <source>
        <dbReference type="UniProtKB" id="P85978"/>
    </source>
</evidence>
<evidence type="ECO:0000305" key="4"/>
<name>SODC_PLESN</name>